<name>RR8_CYAPA</name>
<comment type="function">
    <text evidence="1">One of the primary rRNA binding proteins, it binds directly to 16S rRNA central domain where it helps coordinate assembly of the platform of the 30S subunit.</text>
</comment>
<comment type="subunit">
    <text>Part of the 30S ribosomal subunit.</text>
</comment>
<comment type="subcellular location">
    <subcellularLocation>
        <location>Plastid</location>
        <location>Cyanelle</location>
    </subcellularLocation>
</comment>
<comment type="similarity">
    <text evidence="2">Belongs to the universal ribosomal protein uS8 family.</text>
</comment>
<geneLocation type="cyanelle"/>
<dbReference type="EMBL" id="X16548">
    <property type="protein sequence ID" value="CAC35455.1"/>
    <property type="molecule type" value="Genomic_DNA"/>
</dbReference>
<dbReference type="EMBL" id="M30487">
    <property type="protein sequence ID" value="AAA63626.1"/>
    <property type="molecule type" value="Genomic_DNA"/>
</dbReference>
<dbReference type="EMBL" id="U30821">
    <property type="protein sequence ID" value="AAA81222.1"/>
    <property type="molecule type" value="Genomic_DNA"/>
</dbReference>
<dbReference type="PIR" id="T06879">
    <property type="entry name" value="R3KT8"/>
</dbReference>
<dbReference type="RefSeq" id="NP_043191.1">
    <property type="nucleotide sequence ID" value="NC_001675.1"/>
</dbReference>
<dbReference type="SMR" id="P14826"/>
<dbReference type="GeneID" id="801675"/>
<dbReference type="GO" id="GO:0009842">
    <property type="term" value="C:cyanelle"/>
    <property type="evidence" value="ECO:0007669"/>
    <property type="project" value="UniProtKB-SubCell"/>
</dbReference>
<dbReference type="GO" id="GO:1990904">
    <property type="term" value="C:ribonucleoprotein complex"/>
    <property type="evidence" value="ECO:0007669"/>
    <property type="project" value="UniProtKB-KW"/>
</dbReference>
<dbReference type="GO" id="GO:0005840">
    <property type="term" value="C:ribosome"/>
    <property type="evidence" value="ECO:0007669"/>
    <property type="project" value="UniProtKB-KW"/>
</dbReference>
<dbReference type="GO" id="GO:0019843">
    <property type="term" value="F:rRNA binding"/>
    <property type="evidence" value="ECO:0007669"/>
    <property type="project" value="UniProtKB-KW"/>
</dbReference>
<dbReference type="GO" id="GO:0003735">
    <property type="term" value="F:structural constituent of ribosome"/>
    <property type="evidence" value="ECO:0007669"/>
    <property type="project" value="InterPro"/>
</dbReference>
<dbReference type="GO" id="GO:0006412">
    <property type="term" value="P:translation"/>
    <property type="evidence" value="ECO:0007669"/>
    <property type="project" value="InterPro"/>
</dbReference>
<dbReference type="FunFam" id="3.30.1370.30:FF:000002">
    <property type="entry name" value="30S ribosomal protein S8"/>
    <property type="match status" value="1"/>
</dbReference>
<dbReference type="FunFam" id="3.30.1490.10:FF:000001">
    <property type="entry name" value="30S ribosomal protein S8"/>
    <property type="match status" value="1"/>
</dbReference>
<dbReference type="Gene3D" id="3.30.1370.30">
    <property type="match status" value="1"/>
</dbReference>
<dbReference type="Gene3D" id="3.30.1490.10">
    <property type="match status" value="1"/>
</dbReference>
<dbReference type="HAMAP" id="MF_01302_B">
    <property type="entry name" value="Ribosomal_uS8_B"/>
    <property type="match status" value="1"/>
</dbReference>
<dbReference type="InterPro" id="IPR000630">
    <property type="entry name" value="Ribosomal_uS8"/>
</dbReference>
<dbReference type="InterPro" id="IPR047863">
    <property type="entry name" value="Ribosomal_uS8_CS"/>
</dbReference>
<dbReference type="InterPro" id="IPR035987">
    <property type="entry name" value="Ribosomal_uS8_sf"/>
</dbReference>
<dbReference type="NCBIfam" id="NF001109">
    <property type="entry name" value="PRK00136.1"/>
    <property type="match status" value="1"/>
</dbReference>
<dbReference type="PANTHER" id="PTHR11758">
    <property type="entry name" value="40S RIBOSOMAL PROTEIN S15A"/>
    <property type="match status" value="1"/>
</dbReference>
<dbReference type="Pfam" id="PF00410">
    <property type="entry name" value="Ribosomal_S8"/>
    <property type="match status" value="1"/>
</dbReference>
<dbReference type="SUPFAM" id="SSF56047">
    <property type="entry name" value="Ribosomal protein S8"/>
    <property type="match status" value="1"/>
</dbReference>
<dbReference type="PROSITE" id="PS00053">
    <property type="entry name" value="RIBOSOMAL_S8"/>
    <property type="match status" value="1"/>
</dbReference>
<gene>
    <name type="primary">rps8</name>
</gene>
<reference key="1">
    <citation type="journal article" date="1990" name="FEBS Lett.">
        <title>The cyanelle genome of Cyanophora paradoxa encodes ribosomal proteins not encoded by the chloroplasts genomes of higher plants.</title>
        <authorList>
            <person name="Bryant D.A."/>
            <person name="Stirewalt V.L."/>
        </authorList>
    </citation>
    <scope>NUCLEOTIDE SEQUENCE [GENOMIC DNA]</scope>
    <source>
        <strain>UTEX LB 555 / Pringsheim</strain>
    </source>
</reference>
<reference key="2">
    <citation type="journal article" date="1990" name="Mol. Gen. Genet.">
        <title>The cyanelle S10 spc ribosomal protein gene operon from Cyanophora paradoxa.</title>
        <authorList>
            <person name="Michalowski C.B."/>
            <person name="Pfanzagl B."/>
            <person name="Loeffelhardt W."/>
            <person name="Bohnert H.J."/>
        </authorList>
    </citation>
    <scope>NUCLEOTIDE SEQUENCE [GENOMIC DNA]</scope>
    <source>
        <strain>UTEX LB 555 / Pringsheim</strain>
    </source>
</reference>
<reference key="3">
    <citation type="journal article" date="1995" name="Plant Mol. Biol. Rep.">
        <title>Nucleotide sequence of the cyanelle DNA from Cyanophora paradoxa.</title>
        <authorList>
            <person name="Stirewalt V.L."/>
            <person name="Michalowski C.B."/>
            <person name="Loeffelhardt W."/>
            <person name="Bohnert H.J."/>
            <person name="Bryant D.A."/>
        </authorList>
    </citation>
    <scope>NUCLEOTIDE SEQUENCE [LARGE SCALE GENOMIC DNA]</scope>
    <source>
        <strain>UTEX LB 555 / Pringsheim</strain>
    </source>
</reference>
<reference key="4">
    <citation type="book" date="1997" name="Eukaryotism and symbiosis">
        <title>The complete sequence of the cyanelle genome of Cyanophora paradoxa: the genetic complexity of a primitive plastid.</title>
        <editorList>
            <person name="Schenk H.E.A."/>
            <person name="Herrmann R."/>
            <person name="Jeon K.W."/>
            <person name="Mueller N.E."/>
            <person name="Schwemmler W."/>
        </editorList>
        <authorList>
            <person name="Loeffelhardt W."/>
            <person name="Stirewalt V.L."/>
            <person name="Michalowski C.B."/>
            <person name="Annarella M."/>
            <person name="Farley J.Y."/>
            <person name="Schluchter W.M."/>
            <person name="Chung S."/>
            <person name="Newmann-Spallart C."/>
            <person name="Steiner J.M."/>
            <person name="Jakowitsch J."/>
            <person name="Bohnert H.J."/>
            <person name="Bryant D.A."/>
        </authorList>
    </citation>
    <scope>NUCLEOTIDE SEQUENCE [LARGE SCALE GENOMIC DNA]</scope>
    <source>
        <strain>UTEX LB 555 / Pringsheim</strain>
    </source>
</reference>
<proteinExistence type="inferred from homology"/>
<organism>
    <name type="scientific">Cyanophora paradoxa</name>
    <dbReference type="NCBI Taxonomy" id="2762"/>
    <lineage>
        <taxon>Eukaryota</taxon>
        <taxon>Glaucocystophyceae</taxon>
        <taxon>Cyanophoraceae</taxon>
        <taxon>Cyanophora</taxon>
    </lineage>
</organism>
<evidence type="ECO:0000250" key="1"/>
<evidence type="ECO:0000305" key="2"/>
<feature type="chain" id="PRO_0000126557" description="Small ribosomal subunit protein uS8c">
    <location>
        <begin position="1"/>
        <end position="132"/>
    </location>
</feature>
<feature type="sequence conflict" description="In Ref. 1; CAC35455." evidence="2" ref="1">
    <original>G</original>
    <variation>R</variation>
    <location>
        <position position="12"/>
    </location>
</feature>
<feature type="sequence conflict" description="In Ref. 1; CAC35455." evidence="2" ref="1">
    <original>G</original>
    <variation>V</variation>
    <location>
        <position position="87"/>
    </location>
</feature>
<sequence>MVNDTIADMLTGIRNANLAKHKVARVKATKITRCLANVLKEEGLIQNFEEIENNLQNELLISLKYKGKKRQPIITALKRISKPGLRGYANHKELPRVLGGLGIAILSTSSGIMTDQTARHKGCGGEVLCYIW</sequence>
<accession>P14826</accession>
<keyword id="KW-0194">Cyanelle</keyword>
<keyword id="KW-0934">Plastid</keyword>
<keyword id="KW-0687">Ribonucleoprotein</keyword>
<keyword id="KW-0689">Ribosomal protein</keyword>
<keyword id="KW-0694">RNA-binding</keyword>
<keyword id="KW-0699">rRNA-binding</keyword>
<protein>
    <recommendedName>
        <fullName evidence="2">Small ribosomal subunit protein uS8c</fullName>
    </recommendedName>
    <alternativeName>
        <fullName>30S ribosomal protein S8, cyanelle</fullName>
    </alternativeName>
</protein>